<name>OPPB_MYCPN</name>
<keyword id="KW-1003">Cell membrane</keyword>
<keyword id="KW-0472">Membrane</keyword>
<keyword id="KW-0571">Peptide transport</keyword>
<keyword id="KW-0653">Protein transport</keyword>
<keyword id="KW-1185">Reference proteome</keyword>
<keyword id="KW-0812">Transmembrane</keyword>
<keyword id="KW-1133">Transmembrane helix</keyword>
<keyword id="KW-0813">Transport</keyword>
<organism>
    <name type="scientific">Mycoplasma pneumoniae (strain ATCC 29342 / M129 / Subtype 1)</name>
    <name type="common">Mycoplasmoides pneumoniae</name>
    <dbReference type="NCBI Taxonomy" id="272634"/>
    <lineage>
        <taxon>Bacteria</taxon>
        <taxon>Bacillati</taxon>
        <taxon>Mycoplasmatota</taxon>
        <taxon>Mycoplasmoidales</taxon>
        <taxon>Mycoplasmoidaceae</taxon>
        <taxon>Mycoplasmoides</taxon>
    </lineage>
</organism>
<proteinExistence type="inferred from homology"/>
<gene>
    <name type="primary">oppB</name>
    <name type="ordered locus">MPN_215</name>
    <name type="ORF">MP616</name>
</gene>
<dbReference type="EMBL" id="U00089">
    <property type="protein sequence ID" value="AAB96264.1"/>
    <property type="molecule type" value="Genomic_DNA"/>
</dbReference>
<dbReference type="PIR" id="S73942">
    <property type="entry name" value="S73942"/>
</dbReference>
<dbReference type="RefSeq" id="NP_109903.1">
    <property type="nucleotide sequence ID" value="NC_000912.1"/>
</dbReference>
<dbReference type="RefSeq" id="WP_010874572.1">
    <property type="nucleotide sequence ID" value="NZ_OU342337.1"/>
</dbReference>
<dbReference type="SMR" id="P75554"/>
<dbReference type="STRING" id="272634.MPN_215"/>
<dbReference type="EnsemblBacteria" id="AAB96264">
    <property type="protein sequence ID" value="AAB96264"/>
    <property type="gene ID" value="MPN_215"/>
</dbReference>
<dbReference type="KEGG" id="mpn:MPN_215"/>
<dbReference type="PATRIC" id="fig|272634.6.peg.234"/>
<dbReference type="HOGENOM" id="CLU_036879_1_2_14"/>
<dbReference type="OrthoDB" id="9789439at2"/>
<dbReference type="BioCyc" id="MPNE272634:G1GJ3-348-MONOMER"/>
<dbReference type="Proteomes" id="UP000000808">
    <property type="component" value="Chromosome"/>
</dbReference>
<dbReference type="GO" id="GO:0005886">
    <property type="term" value="C:plasma membrane"/>
    <property type="evidence" value="ECO:0007669"/>
    <property type="project" value="UniProtKB-SubCell"/>
</dbReference>
<dbReference type="GO" id="GO:0015833">
    <property type="term" value="P:peptide transport"/>
    <property type="evidence" value="ECO:0007669"/>
    <property type="project" value="UniProtKB-KW"/>
</dbReference>
<dbReference type="GO" id="GO:0015031">
    <property type="term" value="P:protein transport"/>
    <property type="evidence" value="ECO:0007669"/>
    <property type="project" value="UniProtKB-KW"/>
</dbReference>
<dbReference type="GO" id="GO:0055085">
    <property type="term" value="P:transmembrane transport"/>
    <property type="evidence" value="ECO:0007669"/>
    <property type="project" value="InterPro"/>
</dbReference>
<dbReference type="CDD" id="cd06261">
    <property type="entry name" value="TM_PBP2"/>
    <property type="match status" value="1"/>
</dbReference>
<dbReference type="Gene3D" id="1.10.3720.10">
    <property type="entry name" value="MetI-like"/>
    <property type="match status" value="1"/>
</dbReference>
<dbReference type="InterPro" id="IPR000515">
    <property type="entry name" value="MetI-like"/>
</dbReference>
<dbReference type="InterPro" id="IPR035906">
    <property type="entry name" value="MetI-like_sf"/>
</dbReference>
<dbReference type="PANTHER" id="PTHR30465">
    <property type="entry name" value="INNER MEMBRANE ABC TRANSPORTER"/>
    <property type="match status" value="1"/>
</dbReference>
<dbReference type="PANTHER" id="PTHR30465:SF0">
    <property type="entry name" value="OLIGOPEPTIDE TRANSPORT SYSTEM PERMEASE PROTEIN APPB"/>
    <property type="match status" value="1"/>
</dbReference>
<dbReference type="Pfam" id="PF00528">
    <property type="entry name" value="BPD_transp_1"/>
    <property type="match status" value="1"/>
</dbReference>
<dbReference type="SUPFAM" id="SSF161098">
    <property type="entry name" value="MetI-like"/>
    <property type="match status" value="1"/>
</dbReference>
<dbReference type="PROSITE" id="PS50928">
    <property type="entry name" value="ABC_TM1"/>
    <property type="match status" value="1"/>
</dbReference>
<protein>
    <recommendedName>
        <fullName evidence="4">Oligopeptide transport system permease protein OppB</fullName>
    </recommendedName>
</protein>
<accession>P75554</accession>
<comment type="function">
    <text evidence="1">Part of the ABC transporter complex OppABCDF involved in the uptake of oligopeptides (By similarity). Probably responsible for the translocation of the substrate across the membrane (By similarity).</text>
</comment>
<comment type="subunit">
    <text evidence="1">The complex is composed of two ATP-binding proteins (OppD and OppF), two transmembrane proteins (OppB and OppC) and a solute-binding protein (OppA).</text>
</comment>
<comment type="subcellular location">
    <subcellularLocation>
        <location evidence="1">Cell membrane</location>
        <topology evidence="2">Multi-pass membrane protein</topology>
    </subcellularLocation>
</comment>
<comment type="similarity">
    <text evidence="4">Belongs to the binding-protein-dependent transport system permease family. OppBC subfamily.</text>
</comment>
<feature type="chain" id="PRO_0000060140" description="Oligopeptide transport system permease protein OppB">
    <location>
        <begin position="1"/>
        <end position="389"/>
    </location>
</feature>
<feature type="transmembrane region" description="Helical" evidence="3">
    <location>
        <begin position="1"/>
        <end position="21"/>
    </location>
</feature>
<feature type="transmembrane region" description="Helical" evidence="3">
    <location>
        <begin position="83"/>
        <end position="103"/>
    </location>
</feature>
<feature type="transmembrane region" description="Helical" evidence="3">
    <location>
        <begin position="115"/>
        <end position="135"/>
    </location>
</feature>
<feature type="transmembrane region" description="Helical" evidence="3">
    <location>
        <begin position="161"/>
        <end position="181"/>
    </location>
</feature>
<feature type="transmembrane region" description="Helical" evidence="3">
    <location>
        <begin position="220"/>
        <end position="240"/>
    </location>
</feature>
<feature type="transmembrane region" description="Helical" evidence="3">
    <location>
        <begin position="270"/>
        <end position="290"/>
    </location>
</feature>
<feature type="domain" description="ABC transmembrane type-1" evidence="3">
    <location>
        <begin position="79"/>
        <end position="289"/>
    </location>
</feature>
<evidence type="ECO:0000250" key="1">
    <source>
        <dbReference type="UniProtKB" id="P24138"/>
    </source>
</evidence>
<evidence type="ECO:0000255" key="2"/>
<evidence type="ECO:0000255" key="3">
    <source>
        <dbReference type="PROSITE-ProRule" id="PRU00441"/>
    </source>
</evidence>
<evidence type="ECO:0000305" key="4"/>
<sequence>MFIVMTIVFFLVNSTGQTPLSATSSKDLEAVKTQLDAFGFNDPLIVRYGRYWQTLFSGSLGTYYSSPNQTIDQIVFGRVPNTLYVVLISFFIGSLLGIIFGMISGLFRGKLIDAVINVLVVLFVSIPSFVVGLGLLKAAGLFRLPPRFINFDDANFNFGNFLLASIIPILSLVFYTSAAFTYRVRNEVVEVMNQDYIKTARSKGLSTFAVALYHIFRNSIIPSVPLFVFGISGAFSGGFIIESLFGVQGVSRILIDSVQSNETNLVMFNIMFIQGIPLLASVFIELIYVLVDPRIRIASAGGVSLWTKLKFVYLRQAWLRKWRRINHTNSHNVLFNSPQHRQLLELKAIDYKHNTISLTEQQKTTLKIEPTANFVLLGTKCLKIITIHG</sequence>
<reference key="1">
    <citation type="journal article" date="1996" name="Nucleic Acids Res.">
        <title>Complete sequence analysis of the genome of the bacterium Mycoplasma pneumoniae.</title>
        <authorList>
            <person name="Himmelreich R."/>
            <person name="Hilbert H."/>
            <person name="Plagens H."/>
            <person name="Pirkl E."/>
            <person name="Li B.-C."/>
            <person name="Herrmann R."/>
        </authorList>
    </citation>
    <scope>NUCLEOTIDE SEQUENCE [LARGE SCALE GENOMIC DNA]</scope>
    <source>
        <strain>ATCC 29342 / M129 / Subtype 1</strain>
    </source>
</reference>